<dbReference type="EC" id="4.1.1.65" evidence="1"/>
<dbReference type="EMBL" id="AE001273">
    <property type="protein sequence ID" value="AAC68294.1"/>
    <property type="molecule type" value="Genomic_DNA"/>
</dbReference>
<dbReference type="PIR" id="E71482">
    <property type="entry name" value="E71482"/>
</dbReference>
<dbReference type="RefSeq" id="NP_220218.1">
    <property type="nucleotide sequence ID" value="NC_000117.1"/>
</dbReference>
<dbReference type="RefSeq" id="WP_009873305.1">
    <property type="nucleotide sequence ID" value="NC_000117.1"/>
</dbReference>
<dbReference type="SMR" id="P0CD79"/>
<dbReference type="STRING" id="272561.CT_699"/>
<dbReference type="EnsemblBacteria" id="AAC68294">
    <property type="protein sequence ID" value="AAC68294"/>
    <property type="gene ID" value="CT_699"/>
</dbReference>
<dbReference type="GeneID" id="884488"/>
<dbReference type="KEGG" id="ctr:CT_699"/>
<dbReference type="PATRIC" id="fig|272561.5.peg.769"/>
<dbReference type="HOGENOM" id="CLU_029061_2_2_0"/>
<dbReference type="InParanoid" id="P0CD79"/>
<dbReference type="OrthoDB" id="9802030at2"/>
<dbReference type="BRENDA" id="4.1.1.65">
    <property type="organism ID" value="1315"/>
</dbReference>
<dbReference type="UniPathway" id="UPA00558">
    <property type="reaction ID" value="UER00616"/>
</dbReference>
<dbReference type="Proteomes" id="UP000000431">
    <property type="component" value="Chromosome"/>
</dbReference>
<dbReference type="GO" id="GO:0005886">
    <property type="term" value="C:plasma membrane"/>
    <property type="evidence" value="ECO:0007669"/>
    <property type="project" value="UniProtKB-SubCell"/>
</dbReference>
<dbReference type="GO" id="GO:0004609">
    <property type="term" value="F:phosphatidylserine decarboxylase activity"/>
    <property type="evidence" value="ECO:0007669"/>
    <property type="project" value="UniProtKB-UniRule"/>
</dbReference>
<dbReference type="GO" id="GO:0006646">
    <property type="term" value="P:phosphatidylethanolamine biosynthetic process"/>
    <property type="evidence" value="ECO:0007669"/>
    <property type="project" value="UniProtKB-UniRule"/>
</dbReference>
<dbReference type="HAMAP" id="MF_00663">
    <property type="entry name" value="PS_decarb_PSD_B_type2"/>
    <property type="match status" value="1"/>
</dbReference>
<dbReference type="InterPro" id="IPR003817">
    <property type="entry name" value="PS_Dcarbxylase"/>
</dbReference>
<dbReference type="InterPro" id="IPR033177">
    <property type="entry name" value="PSD-B"/>
</dbReference>
<dbReference type="InterPro" id="IPR033179">
    <property type="entry name" value="PSD_type2_pro"/>
</dbReference>
<dbReference type="NCBIfam" id="NF001941">
    <property type="entry name" value="PRK00723.1"/>
    <property type="match status" value="1"/>
</dbReference>
<dbReference type="NCBIfam" id="TIGR00163">
    <property type="entry name" value="PS_decarb"/>
    <property type="match status" value="1"/>
</dbReference>
<dbReference type="PANTHER" id="PTHR10067">
    <property type="entry name" value="PHOSPHATIDYLSERINE DECARBOXYLASE"/>
    <property type="match status" value="1"/>
</dbReference>
<dbReference type="PANTHER" id="PTHR10067:SF17">
    <property type="entry name" value="PHOSPHATIDYLSERINE DECARBOXYLASE PROENZYME 2"/>
    <property type="match status" value="1"/>
</dbReference>
<dbReference type="Pfam" id="PF02666">
    <property type="entry name" value="PS_Dcarbxylase"/>
    <property type="match status" value="1"/>
</dbReference>
<accession>P0CD79</accession>
<accession>O84705</accession>
<accession>P77850</accession>
<name>PSD_CHLTR</name>
<evidence type="ECO:0000255" key="1">
    <source>
        <dbReference type="HAMAP-Rule" id="MF_00663"/>
    </source>
</evidence>
<organism>
    <name type="scientific">Chlamydia trachomatis serovar D (strain ATCC VR-885 / DSM 19411 / UW-3/Cx)</name>
    <dbReference type="NCBI Taxonomy" id="272561"/>
    <lineage>
        <taxon>Bacteria</taxon>
        <taxon>Pseudomonadati</taxon>
        <taxon>Chlamydiota</taxon>
        <taxon>Chlamydiia</taxon>
        <taxon>Chlamydiales</taxon>
        <taxon>Chlamydiaceae</taxon>
        <taxon>Chlamydia/Chlamydophila group</taxon>
        <taxon>Chlamydia</taxon>
    </lineage>
</organism>
<reference key="1">
    <citation type="journal article" date="1998" name="Science">
        <title>Genome sequence of an obligate intracellular pathogen of humans: Chlamydia trachomatis.</title>
        <authorList>
            <person name="Stephens R.S."/>
            <person name="Kalman S."/>
            <person name="Lammel C.J."/>
            <person name="Fan J."/>
            <person name="Marathe R."/>
            <person name="Aravind L."/>
            <person name="Mitchell W.P."/>
            <person name="Olinger L."/>
            <person name="Tatusov R.L."/>
            <person name="Zhao Q."/>
            <person name="Koonin E.V."/>
            <person name="Davis R.W."/>
        </authorList>
    </citation>
    <scope>NUCLEOTIDE SEQUENCE [LARGE SCALE GENOMIC DNA]</scope>
    <source>
        <strain>ATCC VR-885 / DSM 19411 / UW-3/Cx</strain>
    </source>
</reference>
<feature type="chain" id="PRO_0000029733" description="Phosphatidylserine decarboxylase beta chain" evidence="1">
    <location>
        <begin position="1"/>
        <end position="259"/>
    </location>
</feature>
<feature type="chain" id="PRO_0000029734" description="Phosphatidylserine decarboxylase alpha chain" evidence="1">
    <location>
        <begin position="260"/>
        <end position="301"/>
    </location>
</feature>
<feature type="active site" description="Charge relay system; for autoendoproteolytic cleavage activity" evidence="1">
    <location>
        <position position="117"/>
    </location>
</feature>
<feature type="active site" description="Charge relay system; for autoendoproteolytic cleavage activity" evidence="1">
    <location>
        <position position="173"/>
    </location>
</feature>
<feature type="active site" description="Charge relay system; for autoendoproteolytic cleavage activity" evidence="1">
    <location>
        <position position="260"/>
    </location>
</feature>
<feature type="active site" description="Schiff-base intermediate with substrate; via pyruvic acid; for decarboxylase activity" evidence="1">
    <location>
        <position position="260"/>
    </location>
</feature>
<feature type="site" description="Cleavage (non-hydrolytic); by autocatalysis" evidence="1">
    <location>
        <begin position="259"/>
        <end position="260"/>
    </location>
</feature>
<feature type="modified residue" description="Pyruvic acid (Ser); by autocatalysis" evidence="1">
    <location>
        <position position="260"/>
    </location>
</feature>
<proteinExistence type="inferred from homology"/>
<protein>
    <recommendedName>
        <fullName evidence="1">Phosphatidylserine decarboxylase proenzyme</fullName>
        <ecNumber evidence="1">4.1.1.65</ecNumber>
    </recommendedName>
    <component>
        <recommendedName>
            <fullName evidence="1">Phosphatidylserine decarboxylase alpha chain</fullName>
        </recommendedName>
    </component>
    <component>
        <recommendedName>
            <fullName evidence="1">Phosphatidylserine decarboxylase beta chain</fullName>
        </recommendedName>
    </component>
</protein>
<gene>
    <name evidence="1" type="primary">psd</name>
    <name type="synonym">psdD</name>
    <name type="ordered locus">CT_699</name>
</gene>
<keyword id="KW-1003">Cell membrane</keyword>
<keyword id="KW-0210">Decarboxylase</keyword>
<keyword id="KW-0444">Lipid biosynthesis</keyword>
<keyword id="KW-0443">Lipid metabolism</keyword>
<keyword id="KW-0456">Lyase</keyword>
<keyword id="KW-0472">Membrane</keyword>
<keyword id="KW-0594">Phospholipid biosynthesis</keyword>
<keyword id="KW-1208">Phospholipid metabolism</keyword>
<keyword id="KW-0670">Pyruvate</keyword>
<keyword id="KW-1185">Reference proteome</keyword>
<keyword id="KW-0865">Zymogen</keyword>
<comment type="function">
    <text evidence="1">Catalyzes the formation of phosphatidylethanolamine (PtdEtn) from phosphatidylserine (PtdSer).</text>
</comment>
<comment type="catalytic activity">
    <reaction evidence="1">
        <text>a 1,2-diacyl-sn-glycero-3-phospho-L-serine + H(+) = a 1,2-diacyl-sn-glycero-3-phosphoethanolamine + CO2</text>
        <dbReference type="Rhea" id="RHEA:20828"/>
        <dbReference type="ChEBI" id="CHEBI:15378"/>
        <dbReference type="ChEBI" id="CHEBI:16526"/>
        <dbReference type="ChEBI" id="CHEBI:57262"/>
        <dbReference type="ChEBI" id="CHEBI:64612"/>
        <dbReference type="EC" id="4.1.1.65"/>
    </reaction>
</comment>
<comment type="cofactor">
    <cofactor evidence="1">
        <name>pyruvate</name>
        <dbReference type="ChEBI" id="CHEBI:15361"/>
    </cofactor>
    <text evidence="1">Binds 1 pyruvoyl group covalently per subunit.</text>
</comment>
<comment type="pathway">
    <text evidence="1">Phospholipid metabolism; phosphatidylethanolamine biosynthesis; phosphatidylethanolamine from CDP-diacylglycerol: step 2/2.</text>
</comment>
<comment type="subunit">
    <text evidence="1">Heterodimer of a large membrane-associated beta subunit and a small pyruvoyl-containing alpha subunit.</text>
</comment>
<comment type="subcellular location">
    <subcellularLocation>
        <location evidence="1">Cell membrane</location>
        <topology evidence="1">Peripheral membrane protein</topology>
    </subcellularLocation>
</comment>
<comment type="PTM">
    <text evidence="1">Is synthesized initially as an inactive proenzyme. Formation of the active enzyme involves a self-maturation process in which the active site pyruvoyl group is generated from an internal serine residue via an autocatalytic post-translational modification. Two non-identical subunits are generated from the proenzyme in this reaction, and the pyruvate is formed at the N-terminus of the alpha chain, which is derived from the carboxyl end of the proenzyme. The autoendoproteolytic cleavage occurs by a canonical serine protease mechanism, in which the side chain hydroxyl group of the serine supplies its oxygen atom to form the C-terminus of the beta chain, while the remainder of the serine residue undergoes an oxidative deamination to produce ammonia and the pyruvoyl prosthetic group on the alpha chain. During this reaction, the Ser that is part of the protease active site of the proenzyme becomes the pyruvoyl prosthetic group, which constitutes an essential element of the active site of the mature decarboxylase.</text>
</comment>
<comment type="similarity">
    <text evidence="1">Belongs to the phosphatidylserine decarboxylase family. PSD-B subfamily. Prokaryotic type II sub-subfamily.</text>
</comment>
<sequence>MAAREMLYVNRETGKVEQERIICSSLVKFFIETRIGRALYSVLCKNSLFSRIVGWCQRLRVTRYFIKPFVTKYRICIEESASPLHDYASFNDFFVRKLKPDARPICQGEDICVTPADGAYLVFPSMADLSLFTIKNKPFSLESFLGDPQLAHQYAQGSMAIARLAPFDYHRFHFPIAGIAEAPRRINGHLFSIHPLMLKRNFEVFTENKREITIITSKEFGEVAYVEVGALNVGSIHQTFSPGSYVKKGAEKGFFAFGGSTVVLLFQPQRIIFDADLVGYSAQGLETRCRMGQSLGKRFSS</sequence>